<protein>
    <recommendedName>
        <fullName evidence="1">D-tagatose-1,6-bisphosphate aldolase subunit GatZ</fullName>
    </recommendedName>
</protein>
<organism>
    <name type="scientific">Escherichia coli (strain SE11)</name>
    <dbReference type="NCBI Taxonomy" id="409438"/>
    <lineage>
        <taxon>Bacteria</taxon>
        <taxon>Pseudomonadati</taxon>
        <taxon>Pseudomonadota</taxon>
        <taxon>Gammaproteobacteria</taxon>
        <taxon>Enterobacterales</taxon>
        <taxon>Enterobacteriaceae</taxon>
        <taxon>Escherichia</taxon>
    </lineage>
</organism>
<accession>B6HYT6</accession>
<reference key="1">
    <citation type="journal article" date="2008" name="DNA Res.">
        <title>Complete genome sequence and comparative analysis of the wild-type commensal Escherichia coli strain SE11 isolated from a healthy adult.</title>
        <authorList>
            <person name="Oshima K."/>
            <person name="Toh H."/>
            <person name="Ogura Y."/>
            <person name="Sasamoto H."/>
            <person name="Morita H."/>
            <person name="Park S.-H."/>
            <person name="Ooka T."/>
            <person name="Iyoda S."/>
            <person name="Taylor T.D."/>
            <person name="Hayashi T."/>
            <person name="Itoh K."/>
            <person name="Hattori M."/>
        </authorList>
    </citation>
    <scope>NUCLEOTIDE SEQUENCE [LARGE SCALE GENOMIC DNA]</scope>
    <source>
        <strain>SE11</strain>
    </source>
</reference>
<keyword id="KW-0298">Galactitol metabolism</keyword>
<sequence>MKTLIARHKAGEHIGICSVCSAHPLVIEAALAFDRNSTRKVLIEATSNQVNQFGGYTGMTPADFREFVFTIADKVGFARERIILGGDHLGPNCWQQENADAAMEKSVELVKEYVRAGFSKIHLDASMSCAGDPIPLAPETVAERAAVLCFAAESVATDCQREQLSYVIGTEVPVPGGEASAIQSVHITHVEDTANTLRTHQKAFIARGLTEALTRVIAIVVQPGVEFDHSNIIHYQPQEAQPLAQWIENTRMVYEAHSTDYQTRTAYWELVRDHFAILKVGPALTFALREAIFALAQIEQELIAPENRSGCLAVIEEVMLDEPQYWKKYYRTGFNDSLLDIRYSLSDRIRYYWPHSRIKNSVETMMVNLEGVDIPLGMISQYLPKQFERIQSGELSAIPHQLIMDKIYDVLRAYRYGCAE</sequence>
<name>GATZ_ECOSE</name>
<proteinExistence type="inferred from homology"/>
<evidence type="ECO:0000255" key="1">
    <source>
        <dbReference type="HAMAP-Rule" id="MF_01296"/>
    </source>
</evidence>
<comment type="function">
    <text evidence="1">Component of the tagatose-1,6-bisphosphate aldolase GatYZ that is required for full activity and stability of the Y subunit. Could have a chaperone-like function for the proper and stable folding of GatY. When expressed alone, GatZ does not show any aldolase activity. Is involved in the catabolism of galactitol.</text>
</comment>
<comment type="pathway">
    <text evidence="1">Carbohydrate metabolism; D-tagatose 6-phosphate degradation; D-glyceraldehyde 3-phosphate and glycerone phosphate from D-tagatose 6-phosphate: step 2/2.</text>
</comment>
<comment type="subunit">
    <text evidence="1">Forms a complex with GatY.</text>
</comment>
<comment type="similarity">
    <text evidence="1">Belongs to the GatZ/KbaZ family. GatZ subfamily.</text>
</comment>
<gene>
    <name evidence="1" type="primary">gatZ</name>
    <name type="ordered locus">ECSE_2364</name>
</gene>
<feature type="chain" id="PRO_0000372492" description="D-tagatose-1,6-bisphosphate aldolase subunit GatZ">
    <location>
        <begin position="1"/>
        <end position="420"/>
    </location>
</feature>
<dbReference type="EMBL" id="AP009240">
    <property type="protein sequence ID" value="BAG77888.1"/>
    <property type="molecule type" value="Genomic_DNA"/>
</dbReference>
<dbReference type="RefSeq" id="WP_000853892.1">
    <property type="nucleotide sequence ID" value="NC_011415.1"/>
</dbReference>
<dbReference type="SMR" id="B6HYT6"/>
<dbReference type="KEGG" id="ecy:ECSE_2364"/>
<dbReference type="HOGENOM" id="CLU_053334_0_0_6"/>
<dbReference type="UniPathway" id="UPA00704">
    <property type="reaction ID" value="UER00716"/>
</dbReference>
<dbReference type="Proteomes" id="UP000008199">
    <property type="component" value="Chromosome"/>
</dbReference>
<dbReference type="GO" id="GO:0005886">
    <property type="term" value="C:plasma membrane"/>
    <property type="evidence" value="ECO:0007669"/>
    <property type="project" value="TreeGrafter"/>
</dbReference>
<dbReference type="GO" id="GO:2001059">
    <property type="term" value="P:D-tagatose 6-phosphate catabolic process"/>
    <property type="evidence" value="ECO:0007669"/>
    <property type="project" value="UniProtKB-UniRule"/>
</dbReference>
<dbReference type="GO" id="GO:0019402">
    <property type="term" value="P:galactitol metabolic process"/>
    <property type="evidence" value="ECO:0007669"/>
    <property type="project" value="UniProtKB-KW"/>
</dbReference>
<dbReference type="GO" id="GO:0009401">
    <property type="term" value="P:phosphoenolpyruvate-dependent sugar phosphotransferase system"/>
    <property type="evidence" value="ECO:0007669"/>
    <property type="project" value="TreeGrafter"/>
</dbReference>
<dbReference type="FunFam" id="3.20.20.70:FF:000141">
    <property type="entry name" value="D-tagatose-1,6-bisphosphate aldolase subunit GatZ"/>
    <property type="match status" value="1"/>
</dbReference>
<dbReference type="Gene3D" id="3.20.20.70">
    <property type="entry name" value="Aldolase class I"/>
    <property type="match status" value="1"/>
</dbReference>
<dbReference type="Gene3D" id="1.10.400.20">
    <property type="entry name" value="putative tagatose 6-phosphate kinase domain like"/>
    <property type="match status" value="1"/>
</dbReference>
<dbReference type="HAMAP" id="MF_01296">
    <property type="entry name" value="Tagatose_aldol_GatZ"/>
    <property type="match status" value="1"/>
</dbReference>
<dbReference type="InterPro" id="IPR013785">
    <property type="entry name" value="Aldolase_TIM"/>
</dbReference>
<dbReference type="InterPro" id="IPR012062">
    <property type="entry name" value="GatZ/KbaZ-like"/>
</dbReference>
<dbReference type="InterPro" id="IPR050303">
    <property type="entry name" value="GatZ_KbaZ_carbometab"/>
</dbReference>
<dbReference type="InterPro" id="IPR023436">
    <property type="entry name" value="TagBP_ald_GatZ"/>
</dbReference>
<dbReference type="NCBIfam" id="TIGR02810">
    <property type="entry name" value="agaZ_gatZ"/>
    <property type="match status" value="1"/>
</dbReference>
<dbReference type="NCBIfam" id="NF011626">
    <property type="entry name" value="PRK15052.1"/>
    <property type="match status" value="1"/>
</dbReference>
<dbReference type="PANTHER" id="PTHR32502:SF12">
    <property type="entry name" value="D-TAGATOSE-1,6-BISPHOSPHATE ALDOLASE SUBUNIT GATZ"/>
    <property type="match status" value="1"/>
</dbReference>
<dbReference type="PANTHER" id="PTHR32502">
    <property type="entry name" value="N-ACETYLGALACTOSAMINE PERMEASE II COMPONENT-RELATED"/>
    <property type="match status" value="1"/>
</dbReference>
<dbReference type="Pfam" id="PF08013">
    <property type="entry name" value="GatZ_KbaZ-like"/>
    <property type="match status" value="1"/>
</dbReference>
<dbReference type="PIRSF" id="PIRSF009264">
    <property type="entry name" value="TagBP_ald_AgaZ"/>
    <property type="match status" value="1"/>
</dbReference>
<dbReference type="SUPFAM" id="SSF51569">
    <property type="entry name" value="Aldolase"/>
    <property type="match status" value="1"/>
</dbReference>